<accession>Q6C6V8</accession>
<organism>
    <name type="scientific">Yarrowia lipolytica (strain CLIB 122 / E 150)</name>
    <name type="common">Yeast</name>
    <name type="synonym">Candida lipolytica</name>
    <dbReference type="NCBI Taxonomy" id="284591"/>
    <lineage>
        <taxon>Eukaryota</taxon>
        <taxon>Fungi</taxon>
        <taxon>Dikarya</taxon>
        <taxon>Ascomycota</taxon>
        <taxon>Saccharomycotina</taxon>
        <taxon>Dipodascomycetes</taxon>
        <taxon>Dipodascales</taxon>
        <taxon>Dipodascales incertae sedis</taxon>
        <taxon>Yarrowia</taxon>
    </lineage>
</organism>
<gene>
    <name type="primary">MGM101</name>
    <name type="ordered locus">YALI0E05863g</name>
</gene>
<protein>
    <recommendedName>
        <fullName>Mitochondrial genome maintenance protein MGM101</fullName>
    </recommendedName>
</protein>
<sequence>MRPTVALVVARGVRAMGYRTAAAATKPAAASATSAPATPAKKPAASSYWRKAASAASTASVSNATKKTPVAASSPAAEPIEADDMPQVDTSTVDQAPTFQYPEGAQSNVFQHMNQREIDWEQSFQGLGSQAFSKEAAQVLQAPLTVEDIEITPDGLLYLPEIKYRRVLNAAFGPGGWGLAPRSDTVVTDKIVTREYGLICEGRLVSVARGEQTYFNEDGVPTASEGCKSNAMMRCCKDLGVASELWEPKFIRKFKAQHCEEVWGTHVVNKRKKKLWKLKGETLAYPYQE</sequence>
<comment type="function">
    <text evidence="1">Performs an essential function in the repair of oxidatively damaged mtDNA that is required for the maintenance of the mitochondrial genome. Binds to DNA (By similarity).</text>
</comment>
<comment type="subcellular location">
    <subcellularLocation>
        <location evidence="1">Mitochondrion matrix</location>
        <location evidence="1">Mitochondrion nucleoid</location>
    </subcellularLocation>
</comment>
<comment type="similarity">
    <text evidence="4">Belongs to the MGM101 family.</text>
</comment>
<name>MG101_YARLI</name>
<dbReference type="EMBL" id="CR382131">
    <property type="protein sequence ID" value="CAG79185.1"/>
    <property type="molecule type" value="Genomic_DNA"/>
</dbReference>
<dbReference type="RefSeq" id="XP_503604.1">
    <property type="nucleotide sequence ID" value="XM_503604.1"/>
</dbReference>
<dbReference type="FunCoup" id="Q6C6V8">
    <property type="interactions" value="277"/>
</dbReference>
<dbReference type="STRING" id="284591.Q6C6V8"/>
<dbReference type="EnsemblFungi" id="CAG79185">
    <property type="protein sequence ID" value="CAG79185"/>
    <property type="gene ID" value="YALI0_E05863g"/>
</dbReference>
<dbReference type="KEGG" id="yli:2912335"/>
<dbReference type="VEuPathDB" id="FungiDB:YALI0_E05863g"/>
<dbReference type="HOGENOM" id="CLU_028692_0_3_1"/>
<dbReference type="InParanoid" id="Q6C6V8"/>
<dbReference type="OMA" id="KIWTRKD"/>
<dbReference type="OrthoDB" id="120806at4891"/>
<dbReference type="Proteomes" id="UP000001300">
    <property type="component" value="Chromosome E"/>
</dbReference>
<dbReference type="GO" id="GO:0000262">
    <property type="term" value="C:mitochondrial chromosome"/>
    <property type="evidence" value="ECO:0007669"/>
    <property type="project" value="InterPro"/>
</dbReference>
<dbReference type="GO" id="GO:0042645">
    <property type="term" value="C:mitochondrial nucleoid"/>
    <property type="evidence" value="ECO:0000318"/>
    <property type="project" value="GO_Central"/>
</dbReference>
<dbReference type="GO" id="GO:0003677">
    <property type="term" value="F:DNA binding"/>
    <property type="evidence" value="ECO:0000318"/>
    <property type="project" value="GO_Central"/>
</dbReference>
<dbReference type="GO" id="GO:0003697">
    <property type="term" value="F:single-stranded DNA binding"/>
    <property type="evidence" value="ECO:0007669"/>
    <property type="project" value="InterPro"/>
</dbReference>
<dbReference type="GO" id="GO:0036297">
    <property type="term" value="P:interstrand cross-link repair"/>
    <property type="evidence" value="ECO:0000318"/>
    <property type="project" value="GO_Central"/>
</dbReference>
<dbReference type="GO" id="GO:0000002">
    <property type="term" value="P:mitochondrial genome maintenance"/>
    <property type="evidence" value="ECO:0000318"/>
    <property type="project" value="GO_Central"/>
</dbReference>
<dbReference type="GO" id="GO:0000725">
    <property type="term" value="P:recombinational repair"/>
    <property type="evidence" value="ECO:0000318"/>
    <property type="project" value="GO_Central"/>
</dbReference>
<dbReference type="InterPro" id="IPR009446">
    <property type="entry name" value="Mgm101"/>
</dbReference>
<dbReference type="PANTHER" id="PTHR31404">
    <property type="entry name" value="MITOCHONDRIAL GENOME MAINTENANCE PROTEIN MGM101"/>
    <property type="match status" value="1"/>
</dbReference>
<dbReference type="PANTHER" id="PTHR31404:SF0">
    <property type="entry name" value="MITOCHONDRIAL GENOME MAINTENANCE PROTEIN MGM101"/>
    <property type="match status" value="1"/>
</dbReference>
<dbReference type="Pfam" id="PF06420">
    <property type="entry name" value="Mgm101p"/>
    <property type="match status" value="1"/>
</dbReference>
<keyword id="KW-0227">DNA damage</keyword>
<keyword id="KW-0234">DNA repair</keyword>
<keyword id="KW-0238">DNA-binding</keyword>
<keyword id="KW-0496">Mitochondrion</keyword>
<keyword id="KW-1135">Mitochondrion nucleoid</keyword>
<keyword id="KW-1185">Reference proteome</keyword>
<keyword id="KW-0809">Transit peptide</keyword>
<reference key="1">
    <citation type="journal article" date="2004" name="Nature">
        <title>Genome evolution in yeasts.</title>
        <authorList>
            <person name="Dujon B."/>
            <person name="Sherman D."/>
            <person name="Fischer G."/>
            <person name="Durrens P."/>
            <person name="Casaregola S."/>
            <person name="Lafontaine I."/>
            <person name="de Montigny J."/>
            <person name="Marck C."/>
            <person name="Neuveglise C."/>
            <person name="Talla E."/>
            <person name="Goffard N."/>
            <person name="Frangeul L."/>
            <person name="Aigle M."/>
            <person name="Anthouard V."/>
            <person name="Babour A."/>
            <person name="Barbe V."/>
            <person name="Barnay S."/>
            <person name="Blanchin S."/>
            <person name="Beckerich J.-M."/>
            <person name="Beyne E."/>
            <person name="Bleykasten C."/>
            <person name="Boisrame A."/>
            <person name="Boyer J."/>
            <person name="Cattolico L."/>
            <person name="Confanioleri F."/>
            <person name="de Daruvar A."/>
            <person name="Despons L."/>
            <person name="Fabre E."/>
            <person name="Fairhead C."/>
            <person name="Ferry-Dumazet H."/>
            <person name="Groppi A."/>
            <person name="Hantraye F."/>
            <person name="Hennequin C."/>
            <person name="Jauniaux N."/>
            <person name="Joyet P."/>
            <person name="Kachouri R."/>
            <person name="Kerrest A."/>
            <person name="Koszul R."/>
            <person name="Lemaire M."/>
            <person name="Lesur I."/>
            <person name="Ma L."/>
            <person name="Muller H."/>
            <person name="Nicaud J.-M."/>
            <person name="Nikolski M."/>
            <person name="Oztas S."/>
            <person name="Ozier-Kalogeropoulos O."/>
            <person name="Pellenz S."/>
            <person name="Potier S."/>
            <person name="Richard G.-F."/>
            <person name="Straub M.-L."/>
            <person name="Suleau A."/>
            <person name="Swennen D."/>
            <person name="Tekaia F."/>
            <person name="Wesolowski-Louvel M."/>
            <person name="Westhof E."/>
            <person name="Wirth B."/>
            <person name="Zeniou-Meyer M."/>
            <person name="Zivanovic Y."/>
            <person name="Bolotin-Fukuhara M."/>
            <person name="Thierry A."/>
            <person name="Bouchier C."/>
            <person name="Caudron B."/>
            <person name="Scarpelli C."/>
            <person name="Gaillardin C."/>
            <person name="Weissenbach J."/>
            <person name="Wincker P."/>
            <person name="Souciet J.-L."/>
        </authorList>
    </citation>
    <scope>NUCLEOTIDE SEQUENCE [LARGE SCALE GENOMIC DNA]</scope>
    <source>
        <strain>CLIB 122 / E 150</strain>
    </source>
</reference>
<evidence type="ECO:0000250" key="1"/>
<evidence type="ECO:0000255" key="2"/>
<evidence type="ECO:0000256" key="3">
    <source>
        <dbReference type="SAM" id="MobiDB-lite"/>
    </source>
</evidence>
<evidence type="ECO:0000305" key="4"/>
<proteinExistence type="inferred from homology"/>
<feature type="transit peptide" description="Mitochondrion" evidence="2">
    <location>
        <begin position="1"/>
        <end position="20"/>
    </location>
</feature>
<feature type="chain" id="PRO_0000045820" description="Mitochondrial genome maintenance protein MGM101">
    <location>
        <begin position="21"/>
        <end position="289"/>
    </location>
</feature>
<feature type="region of interest" description="Disordered" evidence="3">
    <location>
        <begin position="24"/>
        <end position="91"/>
    </location>
</feature>
<feature type="compositionally biased region" description="Low complexity" evidence="3">
    <location>
        <begin position="24"/>
        <end position="79"/>
    </location>
</feature>